<protein>
    <recommendedName>
        <fullName>Nitrogenase molybdenum-iron protein beta chain</fullName>
        <ecNumber>1.18.6.1</ecNumber>
    </recommendedName>
    <alternativeName>
        <fullName>Dinitrogenase</fullName>
    </alternativeName>
    <alternativeName>
        <fullName>Nitrogenase component I</fullName>
    </alternativeName>
</protein>
<comment type="function">
    <text>This molybdenum-iron protein is part of the nitrogenase complex that catalyzes the key enzymatic reactions in nitrogen fixation.</text>
</comment>
<comment type="catalytic activity">
    <reaction>
        <text>N2 + 8 reduced [2Fe-2S]-[ferredoxin] + 16 ATP + 16 H2O = H2 + 8 oxidized [2Fe-2S]-[ferredoxin] + 2 NH4(+) + 16 ADP + 16 phosphate + 6 H(+)</text>
        <dbReference type="Rhea" id="RHEA:21448"/>
        <dbReference type="Rhea" id="RHEA-COMP:10000"/>
        <dbReference type="Rhea" id="RHEA-COMP:10001"/>
        <dbReference type="ChEBI" id="CHEBI:15377"/>
        <dbReference type="ChEBI" id="CHEBI:15378"/>
        <dbReference type="ChEBI" id="CHEBI:17997"/>
        <dbReference type="ChEBI" id="CHEBI:18276"/>
        <dbReference type="ChEBI" id="CHEBI:28938"/>
        <dbReference type="ChEBI" id="CHEBI:30616"/>
        <dbReference type="ChEBI" id="CHEBI:33737"/>
        <dbReference type="ChEBI" id="CHEBI:33738"/>
        <dbReference type="ChEBI" id="CHEBI:43474"/>
        <dbReference type="ChEBI" id="CHEBI:456216"/>
        <dbReference type="EC" id="1.18.6.1"/>
    </reaction>
</comment>
<comment type="cofactor">
    <cofactor evidence="1">
        <name>[8Fe-7S] cluster</name>
        <dbReference type="ChEBI" id="CHEBI:21143"/>
    </cofactor>
    <text evidence="1">Binds 1 [8Fe-7S] cluster per heterodimer.</text>
</comment>
<comment type="subunit">
    <text>Tetramer of two alpha and two beta chains. Forms complex with the iron protein (nitrogenase component 2).</text>
</comment>
<comment type="similarity">
    <text evidence="2">Belongs to the NifD/NifK/NifE/NifN family.</text>
</comment>
<accession>P51754</accession>
<gene>
    <name type="primary">nifK2</name>
</gene>
<name>NIFK_METBA</name>
<organism>
    <name type="scientific">Methanosarcina barkeri</name>
    <dbReference type="NCBI Taxonomy" id="2208"/>
    <lineage>
        <taxon>Archaea</taxon>
        <taxon>Methanobacteriati</taxon>
        <taxon>Methanobacteriota</taxon>
        <taxon>Stenosarchaea group</taxon>
        <taxon>Methanomicrobia</taxon>
        <taxon>Methanosarcinales</taxon>
        <taxon>Methanosarcinaceae</taxon>
        <taxon>Methanosarcina</taxon>
    </lineage>
</organism>
<keyword id="KW-0067">ATP-binding</keyword>
<keyword id="KW-0408">Iron</keyword>
<keyword id="KW-0411">Iron-sulfur</keyword>
<keyword id="KW-0479">Metal-binding</keyword>
<keyword id="KW-0535">Nitrogen fixation</keyword>
<keyword id="KW-0547">Nucleotide-binding</keyword>
<keyword id="KW-0560">Oxidoreductase</keyword>
<sequence length="456" mass="49347">MLDYTPCEEVTREAVTINPAKTCQPIGAVYAALGVHNCMPHSHGSQGCLSYLRMCLSRHYREAALATTSSFSEGTAVFGVSANLKEALVNLTTIYKPEVIAIHTTCVAETIGDDVGVILEDVEAEELIDPSIKICAASTPSYVGSHITGYDNMVKSFVTTFTKKSKPNGKLNIIPGFVEPGDIREIKRILSIMEISSIVFPDTTDVFGAPLTGEPGMYPKGGTPIGDIEDSANSVGTIALCRMAGGSAAKILEGRYKVPAKIGPTPIGIRNTDRFVMNAAKLANVAIPPELEDERGRLVDMMTDAHPHYHGKKVAIYGDPDILTGLTSLVMEMGMEPVVVLTGTKSSEFEKEVEGLIGPEHPEADVISGGDMFTLHQIIKRKPVDLLIGNTYGKFISRAEDVPLVRVGFPIMDRANLHYFPIMGYAGAARLVERIANTLLDRKDRDAPDWLLETIQ</sequence>
<reference key="1">
    <citation type="journal article" date="1996" name="J. Bacteriol.">
        <title>Cloning, functional organization, transcript studies, and phylogenetic analysis of the complete nitrogenase structural genes (nifHDK2) and associated genes in the archaeon Methanosarcina barkeri 227.</title>
        <authorList>
            <person name="Chien Y.-T."/>
            <person name="Zinder S.H."/>
        </authorList>
    </citation>
    <scope>NUCLEOTIDE SEQUENCE [GENOMIC DNA]</scope>
    <source>
        <strain>ATCC 43241 / DSM 1538 / 227</strain>
    </source>
</reference>
<reference key="2">
    <citation type="journal article" date="1994" name="J. Bacteriol.">
        <title>Cloning, DNA sequencing, and characterization of a nifD-homologous gene from the archaeon Methanosarcina barkeri 227 which resembles nifD1 from the eubacterium Clostridium pasteurianum.</title>
        <authorList>
            <person name="Chien Y.-T."/>
            <person name="Zinder S.H."/>
        </authorList>
    </citation>
    <scope>NUCLEOTIDE SEQUENCE [GENOMIC DNA] OF 1-45</scope>
    <source>
        <strain>ATCC 43241 / DSM 1538 / 227</strain>
    </source>
</reference>
<feature type="chain" id="PRO_0000153102" description="Nitrogenase molybdenum-iron protein beta chain">
    <location>
        <begin position="1"/>
        <end position="456"/>
    </location>
</feature>
<feature type="binding site" evidence="1">
    <location>
        <position position="23"/>
    </location>
    <ligand>
        <name>[8Fe-7S] cluster</name>
        <dbReference type="ChEBI" id="CHEBI:21143"/>
        <note>ligand shared with alpha chain</note>
    </ligand>
</feature>
<feature type="binding site" evidence="1">
    <location>
        <position position="48"/>
    </location>
    <ligand>
        <name>[8Fe-7S] cluster</name>
        <dbReference type="ChEBI" id="CHEBI:21143"/>
        <note>ligand shared with alpha chain</note>
    </ligand>
</feature>
<feature type="binding site" evidence="1">
    <location>
        <position position="106"/>
    </location>
    <ligand>
        <name>[8Fe-7S] cluster</name>
        <dbReference type="ChEBI" id="CHEBI:21143"/>
        <note>ligand shared with alpha chain</note>
    </ligand>
</feature>
<feature type="binding site" evidence="1">
    <location>
        <position position="141"/>
    </location>
    <ligand>
        <name>[8Fe-7S] cluster</name>
        <dbReference type="ChEBI" id="CHEBI:21143"/>
        <note>ligand shared with alpha chain</note>
    </ligand>
</feature>
<proteinExistence type="inferred from homology"/>
<evidence type="ECO:0000250" key="1"/>
<evidence type="ECO:0000305" key="2"/>
<dbReference type="EC" id="1.18.6.1"/>
<dbReference type="EMBL" id="U32665">
    <property type="protein sequence ID" value="AAA96014.1"/>
    <property type="molecule type" value="Genomic_DNA"/>
</dbReference>
<dbReference type="EMBL" id="U11291">
    <property type="protein sequence ID" value="AAA65881.1"/>
    <property type="molecule type" value="Genomic_DNA"/>
</dbReference>
<dbReference type="SMR" id="P51754"/>
<dbReference type="GO" id="GO:0016612">
    <property type="term" value="C:molybdenum-iron nitrogenase complex"/>
    <property type="evidence" value="ECO:0007669"/>
    <property type="project" value="InterPro"/>
</dbReference>
<dbReference type="GO" id="GO:0005524">
    <property type="term" value="F:ATP binding"/>
    <property type="evidence" value="ECO:0007669"/>
    <property type="project" value="UniProtKB-KW"/>
</dbReference>
<dbReference type="GO" id="GO:0051536">
    <property type="term" value="F:iron-sulfur cluster binding"/>
    <property type="evidence" value="ECO:0007669"/>
    <property type="project" value="UniProtKB-KW"/>
</dbReference>
<dbReference type="GO" id="GO:0046872">
    <property type="term" value="F:metal ion binding"/>
    <property type="evidence" value="ECO:0007669"/>
    <property type="project" value="UniProtKB-KW"/>
</dbReference>
<dbReference type="GO" id="GO:0016163">
    <property type="term" value="F:nitrogenase activity"/>
    <property type="evidence" value="ECO:0007669"/>
    <property type="project" value="UniProtKB-EC"/>
</dbReference>
<dbReference type="GO" id="GO:0009399">
    <property type="term" value="P:nitrogen fixation"/>
    <property type="evidence" value="ECO:0007669"/>
    <property type="project" value="UniProtKB-KW"/>
</dbReference>
<dbReference type="Gene3D" id="3.40.50.1980">
    <property type="entry name" value="Nitrogenase molybdenum iron protein domain"/>
    <property type="match status" value="3"/>
</dbReference>
<dbReference type="Gene3D" id="1.20.89.10">
    <property type="entry name" value="Nitrogenase Molybdenum-iron Protein, subunit B, domain 4"/>
    <property type="match status" value="1"/>
</dbReference>
<dbReference type="InterPro" id="IPR050152">
    <property type="entry name" value="ChlB/BchB/BchZ"/>
</dbReference>
<dbReference type="InterPro" id="IPR000510">
    <property type="entry name" value="Nase/OxRdtase_comp1"/>
</dbReference>
<dbReference type="InterPro" id="IPR000318">
    <property type="entry name" value="Nase_comp1_CS"/>
</dbReference>
<dbReference type="InterPro" id="IPR005976">
    <property type="entry name" value="Nase_Mo-Fe_CF_bsu"/>
</dbReference>
<dbReference type="NCBIfam" id="TIGR01286">
    <property type="entry name" value="nifK"/>
    <property type="match status" value="1"/>
</dbReference>
<dbReference type="PANTHER" id="PTHR33712">
    <property type="entry name" value="LIGHT-INDEPENDENT PROTOCHLOROPHYLLIDE REDUCTASE SUBUNIT B"/>
    <property type="match status" value="1"/>
</dbReference>
<dbReference type="PANTHER" id="PTHR33712:SF7">
    <property type="entry name" value="LIGHT-INDEPENDENT PROTOCHLOROPHYLLIDE REDUCTASE SUBUNIT B"/>
    <property type="match status" value="1"/>
</dbReference>
<dbReference type="Pfam" id="PF00148">
    <property type="entry name" value="Oxidored_nitro"/>
    <property type="match status" value="1"/>
</dbReference>
<dbReference type="SUPFAM" id="SSF53807">
    <property type="entry name" value="Helical backbone' metal receptor"/>
    <property type="match status" value="1"/>
</dbReference>
<dbReference type="PROSITE" id="PS00699">
    <property type="entry name" value="NITROGENASE_1_1"/>
    <property type="match status" value="1"/>
</dbReference>